<gene>
    <name type="primary">TITF1</name>
    <name type="synonym">TTF1</name>
</gene>
<name>TITF1_CANLF</name>
<sequence length="371" mass="38539">MSMSPKHTTPFSVSDILSPLEESYKKVGMEGGGLGAPLAAYRQGQAAPPAAAMQQHAVGHHGAVTAAYHMTAAGVPQLSHSAVGGYCNGNLGNMSELPPYQDTMRNSASGPGWYGANPDPRFPAISRFMGPASGMNMSGMGGLGSLGDVSKNMAPLPSAPRRKRRVLFSQAQVYELERRFKQQKYLSAPEREHLASMIHLTPTQVKIWFQNHRYKMKRQAKDKAAQQQLQQDSGGGGGGGGAGCPQQQQAQQQSPRRVAVPVLVKDGKPCQAGAPAPGAGSLQGHAQQQAQQQAQAAQAAAAAISVGSGGPGLGAHPGHQPGSAGQSPDLAHHAASPAALQGQVSSLSHLNSSGSDYGTMSCSTLLYGRTW</sequence>
<protein>
    <recommendedName>
        <fullName>Thyroid transcription factor 1</fullName>
        <shortName>TTF-1</shortName>
    </recommendedName>
    <alternativeName>
        <fullName>Homeobox protein Nkx-2.1</fullName>
    </alternativeName>
    <alternativeName>
        <fullName>Thyroid nuclear factor 1</fullName>
    </alternativeName>
</protein>
<organism>
    <name type="scientific">Canis lupus familiaris</name>
    <name type="common">Dog</name>
    <name type="synonym">Canis familiaris</name>
    <dbReference type="NCBI Taxonomy" id="9615"/>
    <lineage>
        <taxon>Eukaryota</taxon>
        <taxon>Metazoa</taxon>
        <taxon>Chordata</taxon>
        <taxon>Craniata</taxon>
        <taxon>Vertebrata</taxon>
        <taxon>Euteleostomi</taxon>
        <taxon>Mammalia</taxon>
        <taxon>Eutheria</taxon>
        <taxon>Laurasiatheria</taxon>
        <taxon>Carnivora</taxon>
        <taxon>Caniformia</taxon>
        <taxon>Canidae</taxon>
        <taxon>Canis</taxon>
    </lineage>
</organism>
<proteinExistence type="evidence at transcript level"/>
<reference key="1">
    <citation type="journal article" date="1995" name="Mol. Cell. Endocrinol.">
        <title>Study of TTF-1 gene expression in dog thyrocytes in primary culture.</title>
        <authorList>
            <person name="van Renterghem P.H.G."/>
            <person name="Dremier S."/>
            <person name="Vassar G."/>
            <person name="Christophe J."/>
        </authorList>
    </citation>
    <scope>NUCLEOTIDE SEQUENCE [MRNA]</scope>
</reference>
<accession>P43698</accession>
<dbReference type="EMBL" id="X77910">
    <property type="protein sequence ID" value="CAA54868.1"/>
    <property type="molecule type" value="mRNA"/>
</dbReference>
<dbReference type="PIR" id="I46089">
    <property type="entry name" value="I46089"/>
</dbReference>
<dbReference type="RefSeq" id="NP_001003260.1">
    <property type="nucleotide sequence ID" value="NM_001003260.1"/>
</dbReference>
<dbReference type="BMRB" id="P43698"/>
<dbReference type="SMR" id="P43698"/>
<dbReference type="FunCoup" id="P43698">
    <property type="interactions" value="171"/>
</dbReference>
<dbReference type="STRING" id="9615.ENSCAFP00000063267"/>
<dbReference type="Ensembl" id="ENSCAFT00030005352.1">
    <property type="protein sequence ID" value="ENSCAFP00030004761.1"/>
    <property type="gene ID" value="ENSCAFG00030002878.1"/>
</dbReference>
<dbReference type="Ensembl" id="ENSCAFT00040040686.1">
    <property type="protein sequence ID" value="ENSCAFP00040035484.1"/>
    <property type="gene ID" value="ENSCAFG00040021917.1"/>
</dbReference>
<dbReference type="GeneID" id="403940"/>
<dbReference type="KEGG" id="cfa:403940"/>
<dbReference type="CTD" id="7080"/>
<dbReference type="InParanoid" id="P43698"/>
<dbReference type="OrthoDB" id="3137333at2759"/>
<dbReference type="Proteomes" id="UP000002254">
    <property type="component" value="Unplaced"/>
</dbReference>
<dbReference type="Proteomes" id="UP000694429">
    <property type="component" value="Chromosome 8"/>
</dbReference>
<dbReference type="Proteomes" id="UP000694542">
    <property type="component" value="Chromosome 8"/>
</dbReference>
<dbReference type="Proteomes" id="UP000805418">
    <property type="component" value="Unplaced"/>
</dbReference>
<dbReference type="GO" id="GO:0005654">
    <property type="term" value="C:nucleoplasm"/>
    <property type="evidence" value="ECO:0000250"/>
    <property type="project" value="UniProtKB"/>
</dbReference>
<dbReference type="GO" id="GO:0005634">
    <property type="term" value="C:nucleus"/>
    <property type="evidence" value="ECO:0000318"/>
    <property type="project" value="GO_Central"/>
</dbReference>
<dbReference type="GO" id="GO:0000981">
    <property type="term" value="F:DNA-binding transcription factor activity, RNA polymerase II-specific"/>
    <property type="evidence" value="ECO:0000318"/>
    <property type="project" value="GO_Central"/>
</dbReference>
<dbReference type="GO" id="GO:0000978">
    <property type="term" value="F:RNA polymerase II cis-regulatory region sequence-specific DNA binding"/>
    <property type="evidence" value="ECO:0000318"/>
    <property type="project" value="GO_Central"/>
</dbReference>
<dbReference type="GO" id="GO:0030154">
    <property type="term" value="P:cell differentiation"/>
    <property type="evidence" value="ECO:0000318"/>
    <property type="project" value="GO_Central"/>
</dbReference>
<dbReference type="GO" id="GO:0045893">
    <property type="term" value="P:positive regulation of DNA-templated transcription"/>
    <property type="evidence" value="ECO:0000250"/>
    <property type="project" value="UniProtKB"/>
</dbReference>
<dbReference type="GO" id="GO:0006357">
    <property type="term" value="P:regulation of transcription by RNA polymerase II"/>
    <property type="evidence" value="ECO:0000318"/>
    <property type="project" value="GO_Central"/>
</dbReference>
<dbReference type="CDD" id="cd00086">
    <property type="entry name" value="homeodomain"/>
    <property type="match status" value="1"/>
</dbReference>
<dbReference type="FunFam" id="1.10.10.60:FF:000108">
    <property type="entry name" value="NK2 homeobox 1"/>
    <property type="match status" value="1"/>
</dbReference>
<dbReference type="Gene3D" id="1.10.10.60">
    <property type="entry name" value="Homeodomain-like"/>
    <property type="match status" value="1"/>
</dbReference>
<dbReference type="InterPro" id="IPR001356">
    <property type="entry name" value="HD"/>
</dbReference>
<dbReference type="InterPro" id="IPR020479">
    <property type="entry name" value="HD_metazoa"/>
</dbReference>
<dbReference type="InterPro" id="IPR017970">
    <property type="entry name" value="Homeobox_CS"/>
</dbReference>
<dbReference type="InterPro" id="IPR050394">
    <property type="entry name" value="Homeobox_NK-like"/>
</dbReference>
<dbReference type="InterPro" id="IPR009057">
    <property type="entry name" value="Homeodomain-like_sf"/>
</dbReference>
<dbReference type="PANTHER" id="PTHR24340">
    <property type="entry name" value="HOMEOBOX PROTEIN NKX"/>
    <property type="match status" value="1"/>
</dbReference>
<dbReference type="PANTHER" id="PTHR24340:SF33">
    <property type="entry name" value="HOMEOBOX PROTEIN NKX-2.1"/>
    <property type="match status" value="1"/>
</dbReference>
<dbReference type="Pfam" id="PF00046">
    <property type="entry name" value="Homeodomain"/>
    <property type="match status" value="1"/>
</dbReference>
<dbReference type="PRINTS" id="PR00024">
    <property type="entry name" value="HOMEOBOX"/>
</dbReference>
<dbReference type="SMART" id="SM00389">
    <property type="entry name" value="HOX"/>
    <property type="match status" value="1"/>
</dbReference>
<dbReference type="SUPFAM" id="SSF46689">
    <property type="entry name" value="Homeodomain-like"/>
    <property type="match status" value="1"/>
</dbReference>
<dbReference type="PROSITE" id="PS00027">
    <property type="entry name" value="HOMEOBOX_1"/>
    <property type="match status" value="1"/>
</dbReference>
<dbReference type="PROSITE" id="PS50071">
    <property type="entry name" value="HOMEOBOX_2"/>
    <property type="match status" value="1"/>
</dbReference>
<evidence type="ECO:0000250" key="1"/>
<evidence type="ECO:0000255" key="2">
    <source>
        <dbReference type="PROSITE-ProRule" id="PRU00108"/>
    </source>
</evidence>
<evidence type="ECO:0000256" key="3">
    <source>
        <dbReference type="SAM" id="MobiDB-lite"/>
    </source>
</evidence>
<evidence type="ECO:0000305" key="4"/>
<feature type="chain" id="PRO_0000049341" description="Thyroid transcription factor 1">
    <location>
        <begin position="1"/>
        <end position="371"/>
    </location>
</feature>
<feature type="DNA-binding region" description="Homeobox" evidence="2">
    <location>
        <begin position="161"/>
        <end position="220"/>
    </location>
</feature>
<feature type="region of interest" description="Disordered" evidence="3">
    <location>
        <begin position="219"/>
        <end position="294"/>
    </location>
</feature>
<feature type="region of interest" description="Disordered" evidence="3">
    <location>
        <begin position="308"/>
        <end position="342"/>
    </location>
</feature>
<feature type="compositionally biased region" description="Gly residues" evidence="3">
    <location>
        <begin position="233"/>
        <end position="243"/>
    </location>
</feature>
<feature type="compositionally biased region" description="Low complexity" evidence="3">
    <location>
        <begin position="244"/>
        <end position="253"/>
    </location>
</feature>
<feature type="compositionally biased region" description="Low complexity" evidence="3">
    <location>
        <begin position="272"/>
        <end position="294"/>
    </location>
</feature>
<comment type="function">
    <text>Transcription factor that binds and activates the promoter of thyroid specific genes such as thyroglobulin, thyroperoxidase, and thyrotropin receptor. Crucial in the maintenance of the thyroid differentiation phenotype. May play a role in lung development and surfactant homeostasis.</text>
</comment>
<comment type="subcellular location">
    <subcellularLocation>
        <location>Nucleus</location>
    </subcellularLocation>
</comment>
<comment type="tissue specificity">
    <text>Thyroid, lung and CNS.</text>
</comment>
<comment type="PTM">
    <text evidence="1">Phosphorylated on serine residues.</text>
</comment>
<comment type="similarity">
    <text evidence="4">Belongs to the NK-2 homeobox family.</text>
</comment>
<keyword id="KW-0010">Activator</keyword>
<keyword id="KW-0238">DNA-binding</keyword>
<keyword id="KW-0371">Homeobox</keyword>
<keyword id="KW-0539">Nucleus</keyword>
<keyword id="KW-0597">Phosphoprotein</keyword>
<keyword id="KW-1185">Reference proteome</keyword>
<keyword id="KW-0804">Transcription</keyword>
<keyword id="KW-0805">Transcription regulation</keyword>